<name>ZAPB_ECO81</name>
<accession>B7N2R9</accession>
<feature type="chain" id="PRO_1000164517" description="Cell division protein ZapB">
    <location>
        <begin position="1"/>
        <end position="81"/>
    </location>
</feature>
<feature type="region of interest" description="Disordered" evidence="2">
    <location>
        <begin position="36"/>
        <end position="67"/>
    </location>
</feature>
<feature type="coiled-coil region" evidence="1">
    <location>
        <begin position="5"/>
        <end position="81"/>
    </location>
</feature>
<feature type="compositionally biased region" description="Polar residues" evidence="2">
    <location>
        <begin position="37"/>
        <end position="47"/>
    </location>
</feature>
<feature type="compositionally biased region" description="Basic and acidic residues" evidence="2">
    <location>
        <begin position="48"/>
        <end position="62"/>
    </location>
</feature>
<feature type="modified residue" description="N6-acetyllysine" evidence="1">
    <location>
        <position position="10"/>
    </location>
</feature>
<comment type="function">
    <text evidence="1">Non-essential, abundant cell division factor that is required for proper Z-ring formation. It is recruited early to the divisome by direct interaction with FtsZ, stimulating Z-ring assembly and thereby promoting cell division earlier in the cell cycle. Its recruitment to the Z-ring requires functional FtsA or ZipA.</text>
</comment>
<comment type="subunit">
    <text evidence="1">Homodimer. The ends of the coiled-coil dimer bind to each other, forming polymers. Interacts with FtsZ.</text>
</comment>
<comment type="subcellular location">
    <subcellularLocation>
        <location evidence="1">Cytoplasm</location>
    </subcellularLocation>
    <text evidence="1">Localizes to the septum at mid-cell, in a FtsZ-like pattern.</text>
</comment>
<comment type="similarity">
    <text evidence="1">Belongs to the ZapB family.</text>
</comment>
<gene>
    <name evidence="1" type="primary">zapB</name>
    <name type="ordered locus">ECED1_4630</name>
</gene>
<organism>
    <name type="scientific">Escherichia coli O81 (strain ED1a)</name>
    <dbReference type="NCBI Taxonomy" id="585397"/>
    <lineage>
        <taxon>Bacteria</taxon>
        <taxon>Pseudomonadati</taxon>
        <taxon>Pseudomonadota</taxon>
        <taxon>Gammaproteobacteria</taxon>
        <taxon>Enterobacterales</taxon>
        <taxon>Enterobacteriaceae</taxon>
        <taxon>Escherichia</taxon>
    </lineage>
</organism>
<proteinExistence type="inferred from homology"/>
<dbReference type="EMBL" id="CU928162">
    <property type="protein sequence ID" value="CAR10738.2"/>
    <property type="molecule type" value="Genomic_DNA"/>
</dbReference>
<dbReference type="RefSeq" id="WP_001296623.1">
    <property type="nucleotide sequence ID" value="NC_011745.1"/>
</dbReference>
<dbReference type="SMR" id="B7N2R9"/>
<dbReference type="GeneID" id="93777970"/>
<dbReference type="KEGG" id="ecq:ECED1_4630"/>
<dbReference type="HOGENOM" id="CLU_171174_2_0_6"/>
<dbReference type="Proteomes" id="UP000000748">
    <property type="component" value="Chromosome"/>
</dbReference>
<dbReference type="GO" id="GO:0005737">
    <property type="term" value="C:cytoplasm"/>
    <property type="evidence" value="ECO:0007669"/>
    <property type="project" value="UniProtKB-SubCell"/>
</dbReference>
<dbReference type="GO" id="GO:0000917">
    <property type="term" value="P:division septum assembly"/>
    <property type="evidence" value="ECO:0007669"/>
    <property type="project" value="UniProtKB-KW"/>
</dbReference>
<dbReference type="GO" id="GO:0043093">
    <property type="term" value="P:FtsZ-dependent cytokinesis"/>
    <property type="evidence" value="ECO:0007669"/>
    <property type="project" value="UniProtKB-UniRule"/>
</dbReference>
<dbReference type="FunFam" id="1.20.5.340:FF:000014">
    <property type="entry name" value="Cell division protein ZapB"/>
    <property type="match status" value="1"/>
</dbReference>
<dbReference type="Gene3D" id="1.20.5.340">
    <property type="match status" value="1"/>
</dbReference>
<dbReference type="HAMAP" id="MF_01196">
    <property type="entry name" value="ZapB"/>
    <property type="match status" value="1"/>
</dbReference>
<dbReference type="InterPro" id="IPR009252">
    <property type="entry name" value="Cell_div_ZapB"/>
</dbReference>
<dbReference type="NCBIfam" id="NF011951">
    <property type="entry name" value="PRK15422.1"/>
    <property type="match status" value="1"/>
</dbReference>
<dbReference type="Pfam" id="PF06005">
    <property type="entry name" value="ZapB"/>
    <property type="match status" value="1"/>
</dbReference>
<reference key="1">
    <citation type="journal article" date="2009" name="PLoS Genet.">
        <title>Organised genome dynamics in the Escherichia coli species results in highly diverse adaptive paths.</title>
        <authorList>
            <person name="Touchon M."/>
            <person name="Hoede C."/>
            <person name="Tenaillon O."/>
            <person name="Barbe V."/>
            <person name="Baeriswyl S."/>
            <person name="Bidet P."/>
            <person name="Bingen E."/>
            <person name="Bonacorsi S."/>
            <person name="Bouchier C."/>
            <person name="Bouvet O."/>
            <person name="Calteau A."/>
            <person name="Chiapello H."/>
            <person name="Clermont O."/>
            <person name="Cruveiller S."/>
            <person name="Danchin A."/>
            <person name="Diard M."/>
            <person name="Dossat C."/>
            <person name="Karoui M.E."/>
            <person name="Frapy E."/>
            <person name="Garry L."/>
            <person name="Ghigo J.M."/>
            <person name="Gilles A.M."/>
            <person name="Johnson J."/>
            <person name="Le Bouguenec C."/>
            <person name="Lescat M."/>
            <person name="Mangenot S."/>
            <person name="Martinez-Jehanne V."/>
            <person name="Matic I."/>
            <person name="Nassif X."/>
            <person name="Oztas S."/>
            <person name="Petit M.A."/>
            <person name="Pichon C."/>
            <person name="Rouy Z."/>
            <person name="Ruf C.S."/>
            <person name="Schneider D."/>
            <person name="Tourret J."/>
            <person name="Vacherie B."/>
            <person name="Vallenet D."/>
            <person name="Medigue C."/>
            <person name="Rocha E.P.C."/>
            <person name="Denamur E."/>
        </authorList>
    </citation>
    <scope>NUCLEOTIDE SEQUENCE [LARGE SCALE GENOMIC DNA]</scope>
    <source>
        <strain>ED1a</strain>
    </source>
</reference>
<keyword id="KW-0007">Acetylation</keyword>
<keyword id="KW-0131">Cell cycle</keyword>
<keyword id="KW-0132">Cell division</keyword>
<keyword id="KW-0175">Coiled coil</keyword>
<keyword id="KW-0963">Cytoplasm</keyword>
<keyword id="KW-0717">Septation</keyword>
<protein>
    <recommendedName>
        <fullName evidence="1">Cell division protein ZapB</fullName>
    </recommendedName>
</protein>
<sequence>MTMSLEVFEKLEAKVQQAIDTITLLQMEIEELKEKNNSLSQEVQNAQHQREELERENNHLKEQQNGWQERLQALLGRMEEV</sequence>
<evidence type="ECO:0000255" key="1">
    <source>
        <dbReference type="HAMAP-Rule" id="MF_01196"/>
    </source>
</evidence>
<evidence type="ECO:0000256" key="2">
    <source>
        <dbReference type="SAM" id="MobiDB-lite"/>
    </source>
</evidence>